<accession>Q02158</accession>
<accession>Q54CR5</accession>
<dbReference type="EC" id="3.1.4.11"/>
<dbReference type="EMBL" id="M95783">
    <property type="protein sequence ID" value="AAA33235.1"/>
    <property type="molecule type" value="mRNA"/>
</dbReference>
<dbReference type="EMBL" id="AY392433">
    <property type="protein sequence ID" value="AAQ98875.1"/>
    <property type="molecule type" value="Genomic_DNA"/>
</dbReference>
<dbReference type="EMBL" id="AAFI02000196">
    <property type="protein sequence ID" value="EAL61042.1"/>
    <property type="molecule type" value="Genomic_DNA"/>
</dbReference>
<dbReference type="PIR" id="A44165">
    <property type="entry name" value="A44165"/>
</dbReference>
<dbReference type="RefSeq" id="XP_629476.1">
    <property type="nucleotide sequence ID" value="XM_629474.1"/>
</dbReference>
<dbReference type="SMR" id="Q02158"/>
<dbReference type="FunCoup" id="Q02158">
    <property type="interactions" value="91"/>
</dbReference>
<dbReference type="STRING" id="44689.Q02158"/>
<dbReference type="PaxDb" id="44689-DDB0201656"/>
<dbReference type="EnsemblProtists" id="EAL61042">
    <property type="protein sequence ID" value="EAL61042"/>
    <property type="gene ID" value="DDB_G0292736"/>
</dbReference>
<dbReference type="GeneID" id="8628866"/>
<dbReference type="KEGG" id="ddi:DDB_G0292736"/>
<dbReference type="dictyBase" id="DDB_G0292736">
    <property type="gene designation" value="plc"/>
</dbReference>
<dbReference type="VEuPathDB" id="AmoebaDB:DDB_G0292736"/>
<dbReference type="eggNOG" id="KOG0169">
    <property type="taxonomic scope" value="Eukaryota"/>
</dbReference>
<dbReference type="HOGENOM" id="CLU_002738_0_2_1"/>
<dbReference type="InParanoid" id="Q02158"/>
<dbReference type="OMA" id="LAVYCHA"/>
<dbReference type="PhylomeDB" id="Q02158"/>
<dbReference type="Reactome" id="R-DDI-112043">
    <property type="pathway name" value="PLC beta mediated events"/>
</dbReference>
<dbReference type="Reactome" id="R-DDI-114604">
    <property type="pathway name" value="GPVI-mediated activation cascade"/>
</dbReference>
<dbReference type="Reactome" id="R-DDI-1169408">
    <property type="pathway name" value="ISG15 antiviral mechanism"/>
</dbReference>
<dbReference type="Reactome" id="R-DDI-1855204">
    <property type="pathway name" value="Synthesis of IP3 and IP4 in the cytosol"/>
</dbReference>
<dbReference type="Reactome" id="R-DDI-202433">
    <property type="pathway name" value="Generation of second messenger molecules"/>
</dbReference>
<dbReference type="Reactome" id="R-DDI-399997">
    <property type="pathway name" value="Acetylcholine regulates insulin secretion"/>
</dbReference>
<dbReference type="Reactome" id="R-DDI-416476">
    <property type="pathway name" value="G alpha (q) signalling events"/>
</dbReference>
<dbReference type="Reactome" id="R-DDI-434316">
    <property type="pathway name" value="Fatty Acids bound to GPR40 (FFAR1) regulate insulin secretion"/>
</dbReference>
<dbReference type="Reactome" id="R-DDI-5607764">
    <property type="pathway name" value="CLEC7A (Dectin-1) signaling"/>
</dbReference>
<dbReference type="Reactome" id="R-DDI-983695">
    <property type="pathway name" value="Antigen activates B Cell Receptor (BCR) leading to generation of second messengers"/>
</dbReference>
<dbReference type="PRO" id="PR:Q02158"/>
<dbReference type="Proteomes" id="UP000002195">
    <property type="component" value="Chromosome 6"/>
</dbReference>
<dbReference type="GO" id="GO:0016020">
    <property type="term" value="C:membrane"/>
    <property type="evidence" value="ECO:0000314"/>
    <property type="project" value="dictyBase"/>
</dbReference>
<dbReference type="GO" id="GO:0005509">
    <property type="term" value="F:calcium ion binding"/>
    <property type="evidence" value="ECO:0007669"/>
    <property type="project" value="InterPro"/>
</dbReference>
<dbReference type="GO" id="GO:0004435">
    <property type="term" value="F:phosphatidylinositol-4,5-bisphosphate phospholipase C activity"/>
    <property type="evidence" value="ECO:0000314"/>
    <property type="project" value="dictyBase"/>
</dbReference>
<dbReference type="GO" id="GO:0045184">
    <property type="term" value="P:establishment of protein localization"/>
    <property type="evidence" value="ECO:0000315"/>
    <property type="project" value="dictyBase"/>
</dbReference>
<dbReference type="GO" id="GO:0032959">
    <property type="term" value="P:inositol trisphosphate biosynthetic process"/>
    <property type="evidence" value="ECO:0000315"/>
    <property type="project" value="dictyBase"/>
</dbReference>
<dbReference type="GO" id="GO:0016042">
    <property type="term" value="P:lipid catabolic process"/>
    <property type="evidence" value="ECO:0007669"/>
    <property type="project" value="UniProtKB-KW"/>
</dbReference>
<dbReference type="GO" id="GO:1903665">
    <property type="term" value="P:negative regulation of asexual reproduction"/>
    <property type="evidence" value="ECO:0000315"/>
    <property type="project" value="dictyBase"/>
</dbReference>
<dbReference type="GO" id="GO:0050922">
    <property type="term" value="P:negative regulation of chemotaxis"/>
    <property type="evidence" value="ECO:0000315"/>
    <property type="project" value="dictyBase"/>
</dbReference>
<dbReference type="GO" id="GO:0006909">
    <property type="term" value="P:phagocytosis"/>
    <property type="evidence" value="ECO:0000315"/>
    <property type="project" value="dictyBase"/>
</dbReference>
<dbReference type="GO" id="GO:0048015">
    <property type="term" value="P:phosphatidylinositol-mediated signaling"/>
    <property type="evidence" value="ECO:0000318"/>
    <property type="project" value="GO_Central"/>
</dbReference>
<dbReference type="GO" id="GO:0051209">
    <property type="term" value="P:release of sequestered calcium ion into cytosol"/>
    <property type="evidence" value="ECO:0000318"/>
    <property type="project" value="GO_Central"/>
</dbReference>
<dbReference type="GO" id="GO:0048837">
    <property type="term" value="P:sorocarp sorus development"/>
    <property type="evidence" value="ECO:0000315"/>
    <property type="project" value="dictyBase"/>
</dbReference>
<dbReference type="CDD" id="cd00275">
    <property type="entry name" value="C2_PLC_like"/>
    <property type="match status" value="1"/>
</dbReference>
<dbReference type="CDD" id="cd15898">
    <property type="entry name" value="EFh_PI-PLC"/>
    <property type="match status" value="1"/>
</dbReference>
<dbReference type="CDD" id="cd08558">
    <property type="entry name" value="PI-PLCc_eukaryota"/>
    <property type="match status" value="1"/>
</dbReference>
<dbReference type="FunFam" id="2.30.29.30:FF:000914">
    <property type="entry name" value="1-phosphatidylinositol 4,5-bisphosphate phosphodiesterase"/>
    <property type="match status" value="1"/>
</dbReference>
<dbReference type="Gene3D" id="2.60.40.150">
    <property type="entry name" value="C2 domain"/>
    <property type="match status" value="1"/>
</dbReference>
<dbReference type="Gene3D" id="1.10.238.10">
    <property type="entry name" value="EF-hand"/>
    <property type="match status" value="1"/>
</dbReference>
<dbReference type="Gene3D" id="3.20.20.190">
    <property type="entry name" value="Phosphatidylinositol (PI) phosphodiesterase"/>
    <property type="match status" value="1"/>
</dbReference>
<dbReference type="Gene3D" id="2.30.29.30">
    <property type="entry name" value="Pleckstrin-homology domain (PH domain)/Phosphotyrosine-binding domain (PTB)"/>
    <property type="match status" value="1"/>
</dbReference>
<dbReference type="InterPro" id="IPR000008">
    <property type="entry name" value="C2_dom"/>
</dbReference>
<dbReference type="InterPro" id="IPR035892">
    <property type="entry name" value="C2_domain_sf"/>
</dbReference>
<dbReference type="InterPro" id="IPR011992">
    <property type="entry name" value="EF-hand-dom_pair"/>
</dbReference>
<dbReference type="InterPro" id="IPR018247">
    <property type="entry name" value="EF_Hand_1_Ca_BS"/>
</dbReference>
<dbReference type="InterPro" id="IPR002048">
    <property type="entry name" value="EF_hand_dom"/>
</dbReference>
<dbReference type="InterPro" id="IPR011993">
    <property type="entry name" value="PH-like_dom_sf"/>
</dbReference>
<dbReference type="InterPro" id="IPR001192">
    <property type="entry name" value="PI-PLC_fam"/>
</dbReference>
<dbReference type="InterPro" id="IPR017946">
    <property type="entry name" value="PLC-like_Pdiesterase_TIM-brl"/>
</dbReference>
<dbReference type="InterPro" id="IPR000909">
    <property type="entry name" value="PLipase_C_PInositol-sp_X_dom"/>
</dbReference>
<dbReference type="InterPro" id="IPR001711">
    <property type="entry name" value="PLipase_C_Pinositol-sp_Y"/>
</dbReference>
<dbReference type="PANTHER" id="PTHR10336:SF36">
    <property type="entry name" value="1-PHOSPHATIDYLINOSITOL 4,5-BISPHOSPHATE PHOSPHODIESTERASE BETA-4"/>
    <property type="match status" value="1"/>
</dbReference>
<dbReference type="PANTHER" id="PTHR10336">
    <property type="entry name" value="PHOSPHOINOSITIDE-SPECIFIC PHOSPHOLIPASE C FAMILY PROTEIN"/>
    <property type="match status" value="1"/>
</dbReference>
<dbReference type="Pfam" id="PF00168">
    <property type="entry name" value="C2"/>
    <property type="match status" value="1"/>
</dbReference>
<dbReference type="Pfam" id="PF00388">
    <property type="entry name" value="PI-PLC-X"/>
    <property type="match status" value="1"/>
</dbReference>
<dbReference type="Pfam" id="PF00387">
    <property type="entry name" value="PI-PLC-Y"/>
    <property type="match status" value="1"/>
</dbReference>
<dbReference type="PRINTS" id="PR00390">
    <property type="entry name" value="PHPHLIPASEC"/>
</dbReference>
<dbReference type="SMART" id="SM00239">
    <property type="entry name" value="C2"/>
    <property type="match status" value="1"/>
</dbReference>
<dbReference type="SMART" id="SM00148">
    <property type="entry name" value="PLCXc"/>
    <property type="match status" value="1"/>
</dbReference>
<dbReference type="SMART" id="SM00149">
    <property type="entry name" value="PLCYc"/>
    <property type="match status" value="1"/>
</dbReference>
<dbReference type="SUPFAM" id="SSF49562">
    <property type="entry name" value="C2 domain (Calcium/lipid-binding domain, CaLB)"/>
    <property type="match status" value="1"/>
</dbReference>
<dbReference type="SUPFAM" id="SSF47473">
    <property type="entry name" value="EF-hand"/>
    <property type="match status" value="1"/>
</dbReference>
<dbReference type="SUPFAM" id="SSF50729">
    <property type="entry name" value="PH domain-like"/>
    <property type="match status" value="1"/>
</dbReference>
<dbReference type="SUPFAM" id="SSF51695">
    <property type="entry name" value="PLC-like phosphodiesterases"/>
    <property type="match status" value="1"/>
</dbReference>
<dbReference type="PROSITE" id="PS50004">
    <property type="entry name" value="C2"/>
    <property type="match status" value="1"/>
</dbReference>
<dbReference type="PROSITE" id="PS00018">
    <property type="entry name" value="EF_HAND_1"/>
    <property type="match status" value="1"/>
</dbReference>
<dbReference type="PROSITE" id="PS50222">
    <property type="entry name" value="EF_HAND_2"/>
    <property type="match status" value="1"/>
</dbReference>
<dbReference type="PROSITE" id="PS50007">
    <property type="entry name" value="PIPLC_X_DOMAIN"/>
    <property type="match status" value="1"/>
</dbReference>
<dbReference type="PROSITE" id="PS50008">
    <property type="entry name" value="PIPLC_Y_DOMAIN"/>
    <property type="match status" value="1"/>
</dbReference>
<protein>
    <recommendedName>
        <fullName>1-phosphatidylinositol 4,5-bisphosphate phosphodiesterase</fullName>
        <ecNumber>3.1.4.11</ecNumber>
    </recommendedName>
    <alternativeName>
        <fullName>Phosphoinositide phospholipase C</fullName>
        <shortName>PLC</shortName>
    </alternativeName>
</protein>
<evidence type="ECO:0000250" key="1"/>
<evidence type="ECO:0000255" key="2"/>
<evidence type="ECO:0000255" key="3">
    <source>
        <dbReference type="PROSITE-ProRule" id="PRU00041"/>
    </source>
</evidence>
<evidence type="ECO:0000255" key="4">
    <source>
        <dbReference type="PROSITE-ProRule" id="PRU00270"/>
    </source>
</evidence>
<evidence type="ECO:0000255" key="5">
    <source>
        <dbReference type="PROSITE-ProRule" id="PRU00271"/>
    </source>
</evidence>
<evidence type="ECO:0000255" key="6">
    <source>
        <dbReference type="PROSITE-ProRule" id="PRU00448"/>
    </source>
</evidence>
<evidence type="ECO:0000255" key="7">
    <source>
        <dbReference type="PROSITE-ProRule" id="PRU10142"/>
    </source>
</evidence>
<evidence type="ECO:0000256" key="8">
    <source>
        <dbReference type="SAM" id="MobiDB-lite"/>
    </source>
</evidence>
<evidence type="ECO:0000305" key="9"/>
<sequence length="801" mass="91280">MDTLTNSQDYSNVDLSLESLAEELYNIQSFNKDVILDSFDIDDYDHTQLDTTIDFNKFKIGLTILKISSKGKPQKKKLIFDLARNQIVCGKKKKVNFSEIDEIRVGHKTNIFNQFKSSKNLKEDIESIQQSFSILFSGNLRKTMDFVCSDIPERRQIVSALYHVVQESKSVNNEYNFVKREWDRVGKDSIDFSTLKKILARLNFTTSDAVLHNLMKFSDSNSDYHLDFSEFSNLLKLLRSHPEMKPVFYKYNGGNGEWVPIQGMIDFFRIEQSEVWTVEQCRDLIKKYHHERLDCISFENFEEFICGEANLAQYPHTSTVYQDTSKPLSYYFINSSHNTYLSGHQLKGLSTSEMYTNTLRQGCKCVELDVWDGNDGDPIIFHGNTLTSQIKFSHVCETIKARGFETSPYPVILSLEVHCSVPQQIMMANHMKEIFGEMLPTPLPEGTKELPTLDSLKYKILLKGHTSHTHVSAVGNSSASSSQSNIQTDDNDDDGAVDLTEYDEVDDRSASSSSSSFSLSFGSSGKKKKITKIKIAPEFEELIYLVSHGFKSGNTTKEIPSYKIHSLVEEKVKQLVQSEPREVVEASQNHLLRVYPRGTRFDSSNFDPMPGWSIGCQLAALNQQTSSEPMWINDGMFSDNGGCGYVLKPPCLLPGECETYDPTSPERIKSSKYSRLIVNVISARQLPKYTKSTKGEVIDPYVTLSIVGTHFDQKVEKTKVIDNNGFNPHWGEEFEFPLYNSQLSMLLIRVDDKDKVGHNRIGHHCIRVENIRPGYRILKLKNNFNRTIPLANLLCKFTFVE</sequence>
<proteinExistence type="evidence at transcript level"/>
<keyword id="KW-0106">Calcium</keyword>
<keyword id="KW-0378">Hydrolase</keyword>
<keyword id="KW-0442">Lipid degradation</keyword>
<keyword id="KW-0443">Lipid metabolism</keyword>
<keyword id="KW-0479">Metal-binding</keyword>
<keyword id="KW-0597">Phosphoprotein</keyword>
<keyword id="KW-1185">Reference proteome</keyword>
<keyword id="KW-0807">Transducer</keyword>
<comment type="function">
    <text>The production of the second messenger molecules diacylglycerol (DAG) and inositol 1,4,5-trisphosphate (IP3) is mediated by activated phosphatidylinositol-specific phospholipase C enzymes.</text>
</comment>
<comment type="catalytic activity">
    <reaction>
        <text>a 1,2-diacyl-sn-glycero-3-phospho-(1D-myo-inositol-4,5-bisphosphate) + H2O = 1D-myo-inositol 1,4,5-trisphosphate + a 1,2-diacyl-sn-glycerol + H(+)</text>
        <dbReference type="Rhea" id="RHEA:33179"/>
        <dbReference type="ChEBI" id="CHEBI:15377"/>
        <dbReference type="ChEBI" id="CHEBI:15378"/>
        <dbReference type="ChEBI" id="CHEBI:17815"/>
        <dbReference type="ChEBI" id="CHEBI:58456"/>
        <dbReference type="ChEBI" id="CHEBI:203600"/>
        <dbReference type="EC" id="3.1.4.11"/>
    </reaction>
</comment>
<comment type="developmental stage">
    <text>Expressed at all stages; increase in expression in the culminating fruiting body and during starvation.</text>
</comment>
<comment type="caution">
    <text evidence="9">It is uncertain whether Met-1 is the initiator.</text>
</comment>
<reference key="1">
    <citation type="journal article" date="1992" name="J. Biol. Chem.">
        <title>Molecular cloning and expression of a phosphoinositide-specific phospholipase C of Dictyostelium discoideum.</title>
        <authorList>
            <person name="Drayer A.L."/>
            <person name="van Haastert P.J."/>
        </authorList>
    </citation>
    <scope>NUCLEOTIDE SEQUENCE [MRNA]</scope>
    <source>
        <strain>NC-4</strain>
    </source>
</reference>
<reference key="2">
    <citation type="journal article" date="2004" name="Eukaryot. Cell">
        <title>Identification of genes dependent on the MADS box transcription factor SrfA in Dictyostelium discoideum development.</title>
        <authorList>
            <person name="Escalante R."/>
            <person name="Iranfar N."/>
            <person name="Sastre L."/>
            <person name="Loomis W.F."/>
        </authorList>
    </citation>
    <scope>NUCLEOTIDE SEQUENCE [GENOMIC DNA]</scope>
</reference>
<reference key="3">
    <citation type="journal article" date="2005" name="Nature">
        <title>The genome of the social amoeba Dictyostelium discoideum.</title>
        <authorList>
            <person name="Eichinger L."/>
            <person name="Pachebat J.A."/>
            <person name="Gloeckner G."/>
            <person name="Rajandream M.A."/>
            <person name="Sucgang R."/>
            <person name="Berriman M."/>
            <person name="Song J."/>
            <person name="Olsen R."/>
            <person name="Szafranski K."/>
            <person name="Xu Q."/>
            <person name="Tunggal B."/>
            <person name="Kummerfeld S."/>
            <person name="Madera M."/>
            <person name="Konfortov B.A."/>
            <person name="Rivero F."/>
            <person name="Bankier A.T."/>
            <person name="Lehmann R."/>
            <person name="Hamlin N."/>
            <person name="Davies R."/>
            <person name="Gaudet P."/>
            <person name="Fey P."/>
            <person name="Pilcher K."/>
            <person name="Chen G."/>
            <person name="Saunders D."/>
            <person name="Sodergren E.J."/>
            <person name="Davis P."/>
            <person name="Kerhornou A."/>
            <person name="Nie X."/>
            <person name="Hall N."/>
            <person name="Anjard C."/>
            <person name="Hemphill L."/>
            <person name="Bason N."/>
            <person name="Farbrother P."/>
            <person name="Desany B."/>
            <person name="Just E."/>
            <person name="Morio T."/>
            <person name="Rost R."/>
            <person name="Churcher C.M."/>
            <person name="Cooper J."/>
            <person name="Haydock S."/>
            <person name="van Driessche N."/>
            <person name="Cronin A."/>
            <person name="Goodhead I."/>
            <person name="Muzny D.M."/>
            <person name="Mourier T."/>
            <person name="Pain A."/>
            <person name="Lu M."/>
            <person name="Harper D."/>
            <person name="Lindsay R."/>
            <person name="Hauser H."/>
            <person name="James K.D."/>
            <person name="Quiles M."/>
            <person name="Madan Babu M."/>
            <person name="Saito T."/>
            <person name="Buchrieser C."/>
            <person name="Wardroper A."/>
            <person name="Felder M."/>
            <person name="Thangavelu M."/>
            <person name="Johnson D."/>
            <person name="Knights A."/>
            <person name="Loulseged H."/>
            <person name="Mungall K.L."/>
            <person name="Oliver K."/>
            <person name="Price C."/>
            <person name="Quail M.A."/>
            <person name="Urushihara H."/>
            <person name="Hernandez J."/>
            <person name="Rabbinowitsch E."/>
            <person name="Steffen D."/>
            <person name="Sanders M."/>
            <person name="Ma J."/>
            <person name="Kohara Y."/>
            <person name="Sharp S."/>
            <person name="Simmonds M.N."/>
            <person name="Spiegler S."/>
            <person name="Tivey A."/>
            <person name="Sugano S."/>
            <person name="White B."/>
            <person name="Walker D."/>
            <person name="Woodward J.R."/>
            <person name="Winckler T."/>
            <person name="Tanaka Y."/>
            <person name="Shaulsky G."/>
            <person name="Schleicher M."/>
            <person name="Weinstock G.M."/>
            <person name="Rosenthal A."/>
            <person name="Cox E.C."/>
            <person name="Chisholm R.L."/>
            <person name="Gibbs R.A."/>
            <person name="Loomis W.F."/>
            <person name="Platzer M."/>
            <person name="Kay R.R."/>
            <person name="Williams J.G."/>
            <person name="Dear P.H."/>
            <person name="Noegel A.A."/>
            <person name="Barrell B.G."/>
            <person name="Kuspa A."/>
        </authorList>
    </citation>
    <scope>NUCLEOTIDE SEQUENCE [LARGE SCALE GENOMIC DNA]</scope>
    <source>
        <strain>AX4</strain>
    </source>
</reference>
<gene>
    <name type="primary">plc</name>
    <name type="synonym">pipA</name>
    <name type="ORF">DDB_G0292736</name>
</gene>
<feature type="chain" id="PRO_0000088509" description="1-phosphatidylinositol 4,5-bisphosphate phosphodiesterase">
    <location>
        <begin position="1"/>
        <end position="801"/>
    </location>
</feature>
<feature type="domain" description="EF-hand" evidence="6">
    <location>
        <begin position="206"/>
        <end position="241"/>
    </location>
</feature>
<feature type="domain" description="PI-PLC X-box" evidence="4">
    <location>
        <begin position="322"/>
        <end position="464"/>
    </location>
</feature>
<feature type="domain" description="PI-PLC Y-box" evidence="5">
    <location>
        <begin position="542"/>
        <end position="652"/>
    </location>
</feature>
<feature type="domain" description="C2" evidence="3">
    <location>
        <begin position="656"/>
        <end position="781"/>
    </location>
</feature>
<feature type="region of interest" description="Disordered" evidence="8">
    <location>
        <begin position="471"/>
        <end position="523"/>
    </location>
</feature>
<feature type="compositionally biased region" description="Low complexity" evidence="8">
    <location>
        <begin position="471"/>
        <end position="485"/>
    </location>
</feature>
<feature type="compositionally biased region" description="Acidic residues" evidence="8">
    <location>
        <begin position="489"/>
        <end position="506"/>
    </location>
</feature>
<feature type="compositionally biased region" description="Low complexity" evidence="8">
    <location>
        <begin position="510"/>
        <end position="523"/>
    </location>
</feature>
<feature type="active site" evidence="4">
    <location>
        <position position="337"/>
    </location>
</feature>
<feature type="active site" evidence="4">
    <location>
        <position position="382"/>
    </location>
</feature>
<feature type="binding site" evidence="1">
    <location>
        <position position="463"/>
    </location>
    <ligand>
        <name>substrate</name>
    </ligand>
</feature>
<feature type="binding site" evidence="7">
    <location>
        <position position="490"/>
    </location>
    <ligand>
        <name>Ca(2+)</name>
        <dbReference type="ChEBI" id="CHEBI:29108"/>
    </ligand>
</feature>
<feature type="binding site" evidence="7">
    <location>
        <position position="492"/>
    </location>
    <ligand>
        <name>Ca(2+)</name>
        <dbReference type="ChEBI" id="CHEBI:29108"/>
    </ligand>
</feature>
<feature type="binding site" evidence="7">
    <location>
        <position position="494"/>
    </location>
    <ligand>
        <name>Ca(2+)</name>
        <dbReference type="ChEBI" id="CHEBI:29108"/>
    </ligand>
</feature>
<feature type="binding site" evidence="7">
    <location>
        <position position="501"/>
    </location>
    <ligand>
        <name>Ca(2+)</name>
        <dbReference type="ChEBI" id="CHEBI:29108"/>
    </ligand>
</feature>
<feature type="binding site" evidence="1">
    <location>
        <position position="566"/>
    </location>
    <ligand>
        <name>substrate</name>
    </ligand>
</feature>
<feature type="binding site" evidence="1">
    <location>
        <position position="593"/>
    </location>
    <ligand>
        <name>substrate</name>
    </ligand>
</feature>
<feature type="modified residue" description="Phosphoserine" evidence="2">
    <location>
        <position position="524"/>
    </location>
</feature>
<feature type="modified residue" description="Phosphothreonine; by PKA and PKG" evidence="2">
    <location>
        <position position="531"/>
    </location>
</feature>
<organism>
    <name type="scientific">Dictyostelium discoideum</name>
    <name type="common">Social amoeba</name>
    <dbReference type="NCBI Taxonomy" id="44689"/>
    <lineage>
        <taxon>Eukaryota</taxon>
        <taxon>Amoebozoa</taxon>
        <taxon>Evosea</taxon>
        <taxon>Eumycetozoa</taxon>
        <taxon>Dictyostelia</taxon>
        <taxon>Dictyosteliales</taxon>
        <taxon>Dictyosteliaceae</taxon>
        <taxon>Dictyostelium</taxon>
    </lineage>
</organism>
<name>PLC_DICDI</name>